<name>ERIC4_RAT</name>
<keyword id="KW-1185">Reference proteome</keyword>
<feature type="chain" id="PRO_0000340279" description="Glutamate-rich protein 4">
    <location>
        <begin position="1"/>
        <end position="143"/>
    </location>
</feature>
<feature type="region of interest" description="Disordered" evidence="1">
    <location>
        <begin position="90"/>
        <end position="143"/>
    </location>
</feature>
<feature type="compositionally biased region" description="Acidic residues" evidence="1">
    <location>
        <begin position="90"/>
        <end position="106"/>
    </location>
</feature>
<feature type="compositionally biased region" description="Basic and acidic residues" evidence="1">
    <location>
        <begin position="107"/>
        <end position="116"/>
    </location>
</feature>
<sequence>MELWAQLKQAGLESSGLGPLPQALRMPPPEGNPGQALMSSGAEFGGARELLLWIWEELGNLRRVDVQLLGQLCDLGLEMGTLREELVTILEEEEEDDDEEEQEEEGEGKNCVEENKGLQGKQGEKCSGNPYPAQRLPDFEMTI</sequence>
<organism>
    <name type="scientific">Rattus norvegicus</name>
    <name type="common">Rat</name>
    <dbReference type="NCBI Taxonomy" id="10116"/>
    <lineage>
        <taxon>Eukaryota</taxon>
        <taxon>Metazoa</taxon>
        <taxon>Chordata</taxon>
        <taxon>Craniata</taxon>
        <taxon>Vertebrata</taxon>
        <taxon>Euteleostomi</taxon>
        <taxon>Mammalia</taxon>
        <taxon>Eutheria</taxon>
        <taxon>Euarchontoglires</taxon>
        <taxon>Glires</taxon>
        <taxon>Rodentia</taxon>
        <taxon>Myomorpha</taxon>
        <taxon>Muroidea</taxon>
        <taxon>Muridae</taxon>
        <taxon>Murinae</taxon>
        <taxon>Rattus</taxon>
    </lineage>
</organism>
<evidence type="ECO:0000256" key="1">
    <source>
        <dbReference type="SAM" id="MobiDB-lite"/>
    </source>
</evidence>
<accession>P0C7N2</accession>
<dbReference type="EMBL" id="AABR03000082">
    <property type="status" value="NOT_ANNOTATED_CDS"/>
    <property type="molecule type" value="Genomic_DNA"/>
</dbReference>
<dbReference type="STRING" id="10116.ENSRNOP00000029967"/>
<dbReference type="PaxDb" id="10116-ENSRNOP00000029967"/>
<dbReference type="AGR" id="RGD:1583255"/>
<dbReference type="RGD" id="1583255">
    <property type="gene designation" value="Erich4"/>
</dbReference>
<dbReference type="eggNOG" id="ENOG502RWFY">
    <property type="taxonomic scope" value="Eukaryota"/>
</dbReference>
<dbReference type="InParanoid" id="P0C7N2"/>
<dbReference type="PhylomeDB" id="P0C7N2"/>
<dbReference type="PRO" id="PR:P0C7N2"/>
<dbReference type="Proteomes" id="UP000002494">
    <property type="component" value="Unplaced"/>
</dbReference>
<dbReference type="InterPro" id="IPR029202">
    <property type="entry name" value="DUF4530"/>
</dbReference>
<dbReference type="PANTHER" id="PTHR36879">
    <property type="entry name" value="GLUTAMATE-RICH PROTEIN 4"/>
    <property type="match status" value="1"/>
</dbReference>
<dbReference type="PANTHER" id="PTHR36879:SF1">
    <property type="entry name" value="GLUTAMATE-RICH PROTEIN 4"/>
    <property type="match status" value="1"/>
</dbReference>
<dbReference type="Pfam" id="PF15039">
    <property type="entry name" value="DUF4530"/>
    <property type="match status" value="1"/>
</dbReference>
<protein>
    <recommendedName>
        <fullName>Glutamate-rich protein 4</fullName>
    </recommendedName>
</protein>
<gene>
    <name type="primary">Erich4</name>
</gene>
<proteinExistence type="predicted"/>
<reference key="1">
    <citation type="journal article" date="2004" name="Nature">
        <title>Genome sequence of the Brown Norway rat yields insights into mammalian evolution.</title>
        <authorList>
            <person name="Gibbs R.A."/>
            <person name="Weinstock G.M."/>
            <person name="Metzker M.L."/>
            <person name="Muzny D.M."/>
            <person name="Sodergren E.J."/>
            <person name="Scherer S."/>
            <person name="Scott G."/>
            <person name="Steffen D."/>
            <person name="Worley K.C."/>
            <person name="Burch P.E."/>
            <person name="Okwuonu G."/>
            <person name="Hines S."/>
            <person name="Lewis L."/>
            <person name="Deramo C."/>
            <person name="Delgado O."/>
            <person name="Dugan-Rocha S."/>
            <person name="Miner G."/>
            <person name="Morgan M."/>
            <person name="Hawes A."/>
            <person name="Gill R."/>
            <person name="Holt R.A."/>
            <person name="Adams M.D."/>
            <person name="Amanatides P.G."/>
            <person name="Baden-Tillson H."/>
            <person name="Barnstead M."/>
            <person name="Chin S."/>
            <person name="Evans C.A."/>
            <person name="Ferriera S."/>
            <person name="Fosler C."/>
            <person name="Glodek A."/>
            <person name="Gu Z."/>
            <person name="Jennings D."/>
            <person name="Kraft C.L."/>
            <person name="Nguyen T."/>
            <person name="Pfannkoch C.M."/>
            <person name="Sitter C."/>
            <person name="Sutton G.G."/>
            <person name="Venter J.C."/>
            <person name="Woodage T."/>
            <person name="Smith D."/>
            <person name="Lee H.-M."/>
            <person name="Gustafson E."/>
            <person name="Cahill P."/>
            <person name="Kana A."/>
            <person name="Doucette-Stamm L."/>
            <person name="Weinstock K."/>
            <person name="Fechtel K."/>
            <person name="Weiss R.B."/>
            <person name="Dunn D.M."/>
            <person name="Green E.D."/>
            <person name="Blakesley R.W."/>
            <person name="Bouffard G.G."/>
            <person name="De Jong P.J."/>
            <person name="Osoegawa K."/>
            <person name="Zhu B."/>
            <person name="Marra M."/>
            <person name="Schein J."/>
            <person name="Bosdet I."/>
            <person name="Fjell C."/>
            <person name="Jones S."/>
            <person name="Krzywinski M."/>
            <person name="Mathewson C."/>
            <person name="Siddiqui A."/>
            <person name="Wye N."/>
            <person name="McPherson J."/>
            <person name="Zhao S."/>
            <person name="Fraser C.M."/>
            <person name="Shetty J."/>
            <person name="Shatsman S."/>
            <person name="Geer K."/>
            <person name="Chen Y."/>
            <person name="Abramzon S."/>
            <person name="Nierman W.C."/>
            <person name="Havlak P.H."/>
            <person name="Chen R."/>
            <person name="Durbin K.J."/>
            <person name="Egan A."/>
            <person name="Ren Y."/>
            <person name="Song X.-Z."/>
            <person name="Li B."/>
            <person name="Liu Y."/>
            <person name="Qin X."/>
            <person name="Cawley S."/>
            <person name="Cooney A.J."/>
            <person name="D'Souza L.M."/>
            <person name="Martin K."/>
            <person name="Wu J.Q."/>
            <person name="Gonzalez-Garay M.L."/>
            <person name="Jackson A.R."/>
            <person name="Kalafus K.J."/>
            <person name="McLeod M.P."/>
            <person name="Milosavljevic A."/>
            <person name="Virk D."/>
            <person name="Volkov A."/>
            <person name="Wheeler D.A."/>
            <person name="Zhang Z."/>
            <person name="Bailey J.A."/>
            <person name="Eichler E.E."/>
            <person name="Tuzun E."/>
            <person name="Birney E."/>
            <person name="Mongin E."/>
            <person name="Ureta-Vidal A."/>
            <person name="Woodwark C."/>
            <person name="Zdobnov E."/>
            <person name="Bork P."/>
            <person name="Suyama M."/>
            <person name="Torrents D."/>
            <person name="Alexandersson M."/>
            <person name="Trask B.J."/>
            <person name="Young J.M."/>
            <person name="Huang H."/>
            <person name="Wang H."/>
            <person name="Xing H."/>
            <person name="Daniels S."/>
            <person name="Gietzen D."/>
            <person name="Schmidt J."/>
            <person name="Stevens K."/>
            <person name="Vitt U."/>
            <person name="Wingrove J."/>
            <person name="Camara F."/>
            <person name="Mar Alba M."/>
            <person name="Abril J.F."/>
            <person name="Guigo R."/>
            <person name="Smit A."/>
            <person name="Dubchak I."/>
            <person name="Rubin E.M."/>
            <person name="Couronne O."/>
            <person name="Poliakov A."/>
            <person name="Huebner N."/>
            <person name="Ganten D."/>
            <person name="Goesele C."/>
            <person name="Hummel O."/>
            <person name="Kreitler T."/>
            <person name="Lee Y.-A."/>
            <person name="Monti J."/>
            <person name="Schulz H."/>
            <person name="Zimdahl H."/>
            <person name="Himmelbauer H."/>
            <person name="Lehrach H."/>
            <person name="Jacob H.J."/>
            <person name="Bromberg S."/>
            <person name="Gullings-Handley J."/>
            <person name="Jensen-Seaman M.I."/>
            <person name="Kwitek A.E."/>
            <person name="Lazar J."/>
            <person name="Pasko D."/>
            <person name="Tonellato P.J."/>
            <person name="Twigger S."/>
            <person name="Ponting C.P."/>
            <person name="Duarte J.M."/>
            <person name="Rice S."/>
            <person name="Goodstadt L."/>
            <person name="Beatson S.A."/>
            <person name="Emes R.D."/>
            <person name="Winter E.E."/>
            <person name="Webber C."/>
            <person name="Brandt P."/>
            <person name="Nyakatura G."/>
            <person name="Adetobi M."/>
            <person name="Chiaromonte F."/>
            <person name="Elnitski L."/>
            <person name="Eswara P."/>
            <person name="Hardison R.C."/>
            <person name="Hou M."/>
            <person name="Kolbe D."/>
            <person name="Makova K."/>
            <person name="Miller W."/>
            <person name="Nekrutenko A."/>
            <person name="Riemer C."/>
            <person name="Schwartz S."/>
            <person name="Taylor J."/>
            <person name="Yang S."/>
            <person name="Zhang Y."/>
            <person name="Lindpaintner K."/>
            <person name="Andrews T.D."/>
            <person name="Caccamo M."/>
            <person name="Clamp M."/>
            <person name="Clarke L."/>
            <person name="Curwen V."/>
            <person name="Durbin R.M."/>
            <person name="Eyras E."/>
            <person name="Searle S.M."/>
            <person name="Cooper G.M."/>
            <person name="Batzoglou S."/>
            <person name="Brudno M."/>
            <person name="Sidow A."/>
            <person name="Stone E.A."/>
            <person name="Payseur B.A."/>
            <person name="Bourque G."/>
            <person name="Lopez-Otin C."/>
            <person name="Puente X.S."/>
            <person name="Chakrabarti K."/>
            <person name="Chatterji S."/>
            <person name="Dewey C."/>
            <person name="Pachter L."/>
            <person name="Bray N."/>
            <person name="Yap V.B."/>
            <person name="Caspi A."/>
            <person name="Tesler G."/>
            <person name="Pevzner P.A."/>
            <person name="Haussler D."/>
            <person name="Roskin K.M."/>
            <person name="Baertsch R."/>
            <person name="Clawson H."/>
            <person name="Furey T.S."/>
            <person name="Hinrichs A.S."/>
            <person name="Karolchik D."/>
            <person name="Kent W.J."/>
            <person name="Rosenbloom K.R."/>
            <person name="Trumbower H."/>
            <person name="Weirauch M."/>
            <person name="Cooper D.N."/>
            <person name="Stenson P.D."/>
            <person name="Ma B."/>
            <person name="Brent M."/>
            <person name="Arumugam M."/>
            <person name="Shteynberg D."/>
            <person name="Copley R.R."/>
            <person name="Taylor M.S."/>
            <person name="Riethman H."/>
            <person name="Mudunuri U."/>
            <person name="Peterson J."/>
            <person name="Guyer M."/>
            <person name="Felsenfeld A."/>
            <person name="Old S."/>
            <person name="Mockrin S."/>
            <person name="Collins F.S."/>
        </authorList>
    </citation>
    <scope>NUCLEOTIDE SEQUENCE [LARGE SCALE GENOMIC DNA]</scope>
    <source>
        <strain>Brown Norway</strain>
    </source>
</reference>